<keyword id="KW-0106">Calcium</keyword>
<keyword id="KW-0165">Cleavage on pair of basic residues</keyword>
<keyword id="KW-0903">Direct protein sequencing</keyword>
<keyword id="KW-0597">Phosphoprotein</keyword>
<keyword id="KW-1185">Reference proteome</keyword>
<keyword id="KW-0964">Secreted</keyword>
<keyword id="KW-0732">Signal</keyword>
<keyword id="KW-0765">Sulfation</keyword>
<feature type="signal peptide" evidence="1">
    <location>
        <begin position="1"/>
        <end position="30"/>
    </location>
</feature>
<feature type="chain" id="PRO_0000005455" description="Secretogranin-2">
    <location>
        <begin position="31"/>
        <end position="617"/>
    </location>
</feature>
<feature type="peptide" id="PRO_0000005456" description="Secretoneurin" evidence="4">
    <location>
        <begin position="184"/>
        <end position="216"/>
    </location>
</feature>
<feature type="peptide" id="PRO_0000432737" description="Manserin" evidence="2">
    <location>
        <begin position="527"/>
        <end position="566"/>
    </location>
</feature>
<feature type="region of interest" description="Disordered" evidence="5">
    <location>
        <begin position="261"/>
        <end position="307"/>
    </location>
</feature>
<feature type="compositionally biased region" description="Basic and acidic residues" evidence="5">
    <location>
        <begin position="261"/>
        <end position="286"/>
    </location>
</feature>
<feature type="compositionally biased region" description="Basic and acidic residues" evidence="5">
    <location>
        <begin position="295"/>
        <end position="307"/>
    </location>
</feature>
<feature type="modified residue" description="Sulfotyrosine" evidence="3">
    <location>
        <position position="153"/>
    </location>
</feature>
<feature type="modified residue" description="Phosphoserine" evidence="2">
    <location>
        <position position="176"/>
    </location>
</feature>
<feature type="modified residue" description="Phosphoserine" evidence="2">
    <location>
        <position position="270"/>
    </location>
</feature>
<feature type="modified residue" description="Phosphoserine" evidence="2">
    <location>
        <position position="434"/>
    </location>
</feature>
<feature type="modified residue" description="Phosphoserine" evidence="7">
    <location>
        <position position="532"/>
    </location>
</feature>
<feature type="modified residue" description="Phosphoserine" evidence="7">
    <location>
        <position position="555"/>
    </location>
</feature>
<feature type="modified residue" description="Phosphoserine" evidence="7">
    <location>
        <position position="556"/>
    </location>
</feature>
<feature type="sequence conflict" description="In Ref. 2; BAB22476." evidence="6" ref="2">
    <original>T</original>
    <variation>A</variation>
    <location>
        <position position="238"/>
    </location>
</feature>
<gene>
    <name type="primary">Scg2</name>
    <name type="synonym">Chgc</name>
    <name type="synonym">Scg-2</name>
</gene>
<sequence>MAGAKAYRLGAVLLLIHLIFLISGAEAASFQRNQLLQKEPDLRLENVQKFPSPEMIRALEYIEKLRQQAHREESSPDYNPYQGVSVPLQLKENGEESHLAESSRDALSEDEWMRIILEALRQAENEPPSAPKENKPYALNLEKNFPVDTPDDYETQQWPERKLKHMRFPLMYEENSRENPFKRTNEIVEEQYTPQSLATLESVFQELGKLTGPSNQKRERVDEEQKLYTDDEDDVYKTNNIAYEDVVGGEDWSPIEEKIETQTQEEVRDSKENTEKNEQINEEMKRSGQLGLPDEENRRESKDQLSEDASKVITYLRRLVNAVGSGRSQSGPNGDRAARLLQKPLDSQSIYQLIEISRNLQIPPEDLIEMLKAGEKPNGLVEPEQDLELAVDLDDIPEADLDRPDMFQSKMLSKGGYPKAPGRGMVEALPDGLSVEDILNVLGMENVVNQKSPYFPNQYSQDKALMRLPYGPGKSRANQIPKVAWIPDVESRQAPYENLNDQELGEYLARMLVKYPELLNTNQLKRVPSPVSSEDDLQEEEQLEQAIKEHLGPGSSQEMERLAKVSKRIPVGSLKNEDTPNRQYLDEDMLLKVLEYLNQEQAEQGREHLAKRAMENM</sequence>
<comment type="function">
    <text evidence="3">Neuroendocrine protein of the granin family that regulates the biogenesis of secretory granules.</text>
</comment>
<comment type="subunit">
    <text evidence="3">Interacts with Secretogranin III/SCG3.</text>
</comment>
<comment type="subcellular location">
    <subcellularLocation>
        <location>Secreted</location>
    </subcellularLocation>
    <text>Neuroendocrine and endocrine secretory granules.</text>
</comment>
<comment type="miscellaneous">
    <text>Binds calcium with a low-affinity.</text>
</comment>
<comment type="similarity">
    <text evidence="6">Belongs to the chromogranin/secretogranin protein family.</text>
</comment>
<reference key="1">
    <citation type="journal article" date="1992" name="FEBS Lett.">
        <title>The organisation of the mouse secretogranin II gene.</title>
        <authorList>
            <person name="Schimmel A."/>
            <person name="Braeunling O."/>
            <person name="Ruether U."/>
            <person name="Huttner W.B."/>
            <person name="Gerdes H.-H."/>
        </authorList>
    </citation>
    <scope>NUCLEOTIDE SEQUENCE [GENOMIC DNA]</scope>
</reference>
<reference key="2">
    <citation type="journal article" date="2005" name="Science">
        <title>The transcriptional landscape of the mammalian genome.</title>
        <authorList>
            <person name="Carninci P."/>
            <person name="Kasukawa T."/>
            <person name="Katayama S."/>
            <person name="Gough J."/>
            <person name="Frith M.C."/>
            <person name="Maeda N."/>
            <person name="Oyama R."/>
            <person name="Ravasi T."/>
            <person name="Lenhard B."/>
            <person name="Wells C."/>
            <person name="Kodzius R."/>
            <person name="Shimokawa K."/>
            <person name="Bajic V.B."/>
            <person name="Brenner S.E."/>
            <person name="Batalov S."/>
            <person name="Forrest A.R."/>
            <person name="Zavolan M."/>
            <person name="Davis M.J."/>
            <person name="Wilming L.G."/>
            <person name="Aidinis V."/>
            <person name="Allen J.E."/>
            <person name="Ambesi-Impiombato A."/>
            <person name="Apweiler R."/>
            <person name="Aturaliya R.N."/>
            <person name="Bailey T.L."/>
            <person name="Bansal M."/>
            <person name="Baxter L."/>
            <person name="Beisel K.W."/>
            <person name="Bersano T."/>
            <person name="Bono H."/>
            <person name="Chalk A.M."/>
            <person name="Chiu K.P."/>
            <person name="Choudhary V."/>
            <person name="Christoffels A."/>
            <person name="Clutterbuck D.R."/>
            <person name="Crowe M.L."/>
            <person name="Dalla E."/>
            <person name="Dalrymple B.P."/>
            <person name="de Bono B."/>
            <person name="Della Gatta G."/>
            <person name="di Bernardo D."/>
            <person name="Down T."/>
            <person name="Engstrom P."/>
            <person name="Fagiolini M."/>
            <person name="Faulkner G."/>
            <person name="Fletcher C.F."/>
            <person name="Fukushima T."/>
            <person name="Furuno M."/>
            <person name="Futaki S."/>
            <person name="Gariboldi M."/>
            <person name="Georgii-Hemming P."/>
            <person name="Gingeras T.R."/>
            <person name="Gojobori T."/>
            <person name="Green R.E."/>
            <person name="Gustincich S."/>
            <person name="Harbers M."/>
            <person name="Hayashi Y."/>
            <person name="Hensch T.K."/>
            <person name="Hirokawa N."/>
            <person name="Hill D."/>
            <person name="Huminiecki L."/>
            <person name="Iacono M."/>
            <person name="Ikeo K."/>
            <person name="Iwama A."/>
            <person name="Ishikawa T."/>
            <person name="Jakt M."/>
            <person name="Kanapin A."/>
            <person name="Katoh M."/>
            <person name="Kawasawa Y."/>
            <person name="Kelso J."/>
            <person name="Kitamura H."/>
            <person name="Kitano H."/>
            <person name="Kollias G."/>
            <person name="Krishnan S.P."/>
            <person name="Kruger A."/>
            <person name="Kummerfeld S.K."/>
            <person name="Kurochkin I.V."/>
            <person name="Lareau L.F."/>
            <person name="Lazarevic D."/>
            <person name="Lipovich L."/>
            <person name="Liu J."/>
            <person name="Liuni S."/>
            <person name="McWilliam S."/>
            <person name="Madan Babu M."/>
            <person name="Madera M."/>
            <person name="Marchionni L."/>
            <person name="Matsuda H."/>
            <person name="Matsuzawa S."/>
            <person name="Miki H."/>
            <person name="Mignone F."/>
            <person name="Miyake S."/>
            <person name="Morris K."/>
            <person name="Mottagui-Tabar S."/>
            <person name="Mulder N."/>
            <person name="Nakano N."/>
            <person name="Nakauchi H."/>
            <person name="Ng P."/>
            <person name="Nilsson R."/>
            <person name="Nishiguchi S."/>
            <person name="Nishikawa S."/>
            <person name="Nori F."/>
            <person name="Ohara O."/>
            <person name="Okazaki Y."/>
            <person name="Orlando V."/>
            <person name="Pang K.C."/>
            <person name="Pavan W.J."/>
            <person name="Pavesi G."/>
            <person name="Pesole G."/>
            <person name="Petrovsky N."/>
            <person name="Piazza S."/>
            <person name="Reed J."/>
            <person name="Reid J.F."/>
            <person name="Ring B.Z."/>
            <person name="Ringwald M."/>
            <person name="Rost B."/>
            <person name="Ruan Y."/>
            <person name="Salzberg S.L."/>
            <person name="Sandelin A."/>
            <person name="Schneider C."/>
            <person name="Schoenbach C."/>
            <person name="Sekiguchi K."/>
            <person name="Semple C.A."/>
            <person name="Seno S."/>
            <person name="Sessa L."/>
            <person name="Sheng Y."/>
            <person name="Shibata Y."/>
            <person name="Shimada H."/>
            <person name="Shimada K."/>
            <person name="Silva D."/>
            <person name="Sinclair B."/>
            <person name="Sperling S."/>
            <person name="Stupka E."/>
            <person name="Sugiura K."/>
            <person name="Sultana R."/>
            <person name="Takenaka Y."/>
            <person name="Taki K."/>
            <person name="Tammoja K."/>
            <person name="Tan S.L."/>
            <person name="Tang S."/>
            <person name="Taylor M.S."/>
            <person name="Tegner J."/>
            <person name="Teichmann S.A."/>
            <person name="Ueda H.R."/>
            <person name="van Nimwegen E."/>
            <person name="Verardo R."/>
            <person name="Wei C.L."/>
            <person name="Yagi K."/>
            <person name="Yamanishi H."/>
            <person name="Zabarovsky E."/>
            <person name="Zhu S."/>
            <person name="Zimmer A."/>
            <person name="Hide W."/>
            <person name="Bult C."/>
            <person name="Grimmond S.M."/>
            <person name="Teasdale R.D."/>
            <person name="Liu E.T."/>
            <person name="Brusic V."/>
            <person name="Quackenbush J."/>
            <person name="Wahlestedt C."/>
            <person name="Mattick J.S."/>
            <person name="Hume D.A."/>
            <person name="Kai C."/>
            <person name="Sasaki D."/>
            <person name="Tomaru Y."/>
            <person name="Fukuda S."/>
            <person name="Kanamori-Katayama M."/>
            <person name="Suzuki M."/>
            <person name="Aoki J."/>
            <person name="Arakawa T."/>
            <person name="Iida J."/>
            <person name="Imamura K."/>
            <person name="Itoh M."/>
            <person name="Kato T."/>
            <person name="Kawaji H."/>
            <person name="Kawagashira N."/>
            <person name="Kawashima T."/>
            <person name="Kojima M."/>
            <person name="Kondo S."/>
            <person name="Konno H."/>
            <person name="Nakano K."/>
            <person name="Ninomiya N."/>
            <person name="Nishio T."/>
            <person name="Okada M."/>
            <person name="Plessy C."/>
            <person name="Shibata K."/>
            <person name="Shiraki T."/>
            <person name="Suzuki S."/>
            <person name="Tagami M."/>
            <person name="Waki K."/>
            <person name="Watahiki A."/>
            <person name="Okamura-Oho Y."/>
            <person name="Suzuki H."/>
            <person name="Kawai J."/>
            <person name="Hayashizaki Y."/>
        </authorList>
    </citation>
    <scope>NUCLEOTIDE SEQUENCE [LARGE SCALE MRNA] OF 119-516</scope>
    <source>
        <strain>C57BL/6J</strain>
        <tissue>Brain</tissue>
    </source>
</reference>
<reference key="3">
    <citation type="journal article" date="1998" name="Neurosci. Lett.">
        <title>Formation and sequence analysis of secretoneurin, a neuropeptide derived from secretogranin II, in mammalian, bird, reptile, amphibian and fish brains.</title>
        <authorList>
            <person name="Leitner B."/>
            <person name="Schneitler C."/>
            <person name="Klocker H."/>
            <person name="Volknandt W."/>
            <person name="Zimmermann H."/>
            <person name="Winkler H."/>
            <person name="Fischer-Colbrie R."/>
        </authorList>
    </citation>
    <scope>NUCLEOTIDE SEQUENCE OF 184-216</scope>
</reference>
<reference key="4">
    <citation type="submission" date="2009-01" db="UniProtKB">
        <authorList>
            <person name="Lubec G."/>
            <person name="Sunyer B."/>
            <person name="Chen W.-Q."/>
        </authorList>
    </citation>
    <scope>PROTEIN SEQUENCE OF 452-463</scope>
    <scope>IDENTIFICATION BY MASS SPECTROMETRY</scope>
    <source>
        <strain>OF1</strain>
        <tissue>Hippocampus</tissue>
    </source>
</reference>
<reference key="5">
    <citation type="journal article" date="2010" name="Cell">
        <title>A tissue-specific atlas of mouse protein phosphorylation and expression.</title>
        <authorList>
            <person name="Huttlin E.L."/>
            <person name="Jedrychowski M.P."/>
            <person name="Elias J.E."/>
            <person name="Goswami T."/>
            <person name="Rad R."/>
            <person name="Beausoleil S.A."/>
            <person name="Villen J."/>
            <person name="Haas W."/>
            <person name="Sowa M.E."/>
            <person name="Gygi S.P."/>
        </authorList>
    </citation>
    <scope>PHOSPHORYLATION [LARGE SCALE ANALYSIS] AT SER-532; SER-555 AND SER-556</scope>
    <scope>IDENTIFICATION BY MASS SPECTROMETRY [LARGE SCALE ANALYSIS]</scope>
    <source>
        <tissue>Brain</tissue>
        <tissue>Brown adipose tissue</tissue>
        <tissue>Pancreas</tissue>
    </source>
</reference>
<proteinExistence type="evidence at protein level"/>
<dbReference type="EMBL" id="X68837">
    <property type="protein sequence ID" value="CAA48727.1"/>
    <property type="molecule type" value="Genomic_DNA"/>
</dbReference>
<dbReference type="EMBL" id="AK002953">
    <property type="protein sequence ID" value="BAB22476.2"/>
    <property type="molecule type" value="mRNA"/>
</dbReference>
<dbReference type="CCDS" id="CCDS15089.1"/>
<dbReference type="PIR" id="S27389">
    <property type="entry name" value="S27389"/>
</dbReference>
<dbReference type="RefSeq" id="NP_033155.1">
    <property type="nucleotide sequence ID" value="NM_009129.3"/>
</dbReference>
<dbReference type="SMR" id="Q03517"/>
<dbReference type="BioGRID" id="203090">
    <property type="interactions" value="4"/>
</dbReference>
<dbReference type="FunCoup" id="Q03517">
    <property type="interactions" value="157"/>
</dbReference>
<dbReference type="STRING" id="10090.ENSMUSP00000062556"/>
<dbReference type="iPTMnet" id="Q03517"/>
<dbReference type="PhosphoSitePlus" id="Q03517"/>
<dbReference type="PaxDb" id="10090-ENSMUSP00000062556"/>
<dbReference type="PeptideAtlas" id="Q03517"/>
<dbReference type="ProteomicsDB" id="255358"/>
<dbReference type="Antibodypedia" id="2205">
    <property type="antibodies" value="339 antibodies from 33 providers"/>
</dbReference>
<dbReference type="Ensembl" id="ENSMUST00000049972.6">
    <property type="protein sequence ID" value="ENSMUSP00000062556.5"/>
    <property type="gene ID" value="ENSMUSG00000050711.8"/>
</dbReference>
<dbReference type="GeneID" id="20254"/>
<dbReference type="KEGG" id="mmu:20254"/>
<dbReference type="UCSC" id="uc007bqr.1">
    <property type="organism name" value="mouse"/>
</dbReference>
<dbReference type="AGR" id="MGI:103033"/>
<dbReference type="CTD" id="7857"/>
<dbReference type="MGI" id="MGI:103033">
    <property type="gene designation" value="Scg2"/>
</dbReference>
<dbReference type="VEuPathDB" id="HostDB:ENSMUSG00000050711"/>
<dbReference type="eggNOG" id="ENOG502QV5W">
    <property type="taxonomic scope" value="Eukaryota"/>
</dbReference>
<dbReference type="GeneTree" id="ENSGT00390000010895"/>
<dbReference type="InParanoid" id="Q03517"/>
<dbReference type="OMA" id="RNAAYDD"/>
<dbReference type="OrthoDB" id="8894600at2759"/>
<dbReference type="PhylomeDB" id="Q03517"/>
<dbReference type="TreeFam" id="TF334018"/>
<dbReference type="Reactome" id="R-MMU-381426">
    <property type="pathway name" value="Regulation of Insulin-like Growth Factor (IGF) transport and uptake by Insulin-like Growth Factor Binding Proteins (IGFBPs)"/>
</dbReference>
<dbReference type="Reactome" id="R-MMU-8957275">
    <property type="pathway name" value="Post-translational protein phosphorylation"/>
</dbReference>
<dbReference type="BioGRID-ORCS" id="20254">
    <property type="hits" value="2 hits in 79 CRISPR screens"/>
</dbReference>
<dbReference type="ChiTaRS" id="Scg2">
    <property type="organism name" value="mouse"/>
</dbReference>
<dbReference type="PRO" id="PR:Q03517"/>
<dbReference type="Proteomes" id="UP000000589">
    <property type="component" value="Chromosome 1"/>
</dbReference>
<dbReference type="RNAct" id="Q03517">
    <property type="molecule type" value="protein"/>
</dbReference>
<dbReference type="Bgee" id="ENSMUSG00000050711">
    <property type="expression patterns" value="Expressed in medial preoptic region and 151 other cell types or tissues"/>
</dbReference>
<dbReference type="ExpressionAtlas" id="Q03517">
    <property type="expression patterns" value="baseline and differential"/>
</dbReference>
<dbReference type="GO" id="GO:0031045">
    <property type="term" value="C:dense core granule"/>
    <property type="evidence" value="ECO:0000314"/>
    <property type="project" value="MGI"/>
</dbReference>
<dbReference type="GO" id="GO:0005615">
    <property type="term" value="C:extracellular space"/>
    <property type="evidence" value="ECO:0000250"/>
    <property type="project" value="HGNC-UCL"/>
</dbReference>
<dbReference type="GO" id="GO:0098992">
    <property type="term" value="C:neuronal dense core vesicle"/>
    <property type="evidence" value="ECO:0000314"/>
    <property type="project" value="SynGO"/>
</dbReference>
<dbReference type="GO" id="GO:0042056">
    <property type="term" value="F:chemoattractant activity"/>
    <property type="evidence" value="ECO:0000250"/>
    <property type="project" value="HGNC-UCL"/>
</dbReference>
<dbReference type="GO" id="GO:0005125">
    <property type="term" value="F:cytokine activity"/>
    <property type="evidence" value="ECO:0000250"/>
    <property type="project" value="HGNC-UCL"/>
</dbReference>
<dbReference type="GO" id="GO:0001525">
    <property type="term" value="P:angiogenesis"/>
    <property type="evidence" value="ECO:0000314"/>
    <property type="project" value="HGNC-UCL"/>
</dbReference>
<dbReference type="GO" id="GO:0048245">
    <property type="term" value="P:eosinophil chemotaxis"/>
    <property type="evidence" value="ECO:0000250"/>
    <property type="project" value="HGNC-UCL"/>
</dbReference>
<dbReference type="GO" id="GO:0050930">
    <property type="term" value="P:induction of positive chemotaxis"/>
    <property type="evidence" value="ECO:0000250"/>
    <property type="project" value="HGNC-UCL"/>
</dbReference>
<dbReference type="GO" id="GO:0035556">
    <property type="term" value="P:intracellular signal transduction"/>
    <property type="evidence" value="ECO:0000250"/>
    <property type="project" value="HGNC-UCL"/>
</dbReference>
<dbReference type="GO" id="GO:0000165">
    <property type="term" value="P:MAPK cascade"/>
    <property type="evidence" value="ECO:0000250"/>
    <property type="project" value="HGNC-UCL"/>
</dbReference>
<dbReference type="GO" id="GO:2000352">
    <property type="term" value="P:negative regulation of endothelial cell apoptotic process"/>
    <property type="evidence" value="ECO:0000250"/>
    <property type="project" value="HGNC"/>
</dbReference>
<dbReference type="GO" id="GO:2001237">
    <property type="term" value="P:negative regulation of extrinsic apoptotic signaling pathway"/>
    <property type="evidence" value="ECO:0007669"/>
    <property type="project" value="Ensembl"/>
</dbReference>
<dbReference type="GO" id="GO:0050918">
    <property type="term" value="P:positive chemotaxis"/>
    <property type="evidence" value="ECO:0000250"/>
    <property type="project" value="HGNC"/>
</dbReference>
<dbReference type="GO" id="GO:0001938">
    <property type="term" value="P:positive regulation of endothelial cell proliferation"/>
    <property type="evidence" value="ECO:0000250"/>
    <property type="project" value="HGNC-UCL"/>
</dbReference>
<dbReference type="InterPro" id="IPR001990">
    <property type="entry name" value="Granin"/>
</dbReference>
<dbReference type="InterPro" id="IPR038858">
    <property type="entry name" value="ScgII"/>
</dbReference>
<dbReference type="PANTHER" id="PTHR15119">
    <property type="entry name" value="SECRETOGRANIN II"/>
    <property type="match status" value="1"/>
</dbReference>
<dbReference type="PANTHER" id="PTHR15119:SF0">
    <property type="entry name" value="SECRETOGRANIN-2"/>
    <property type="match status" value="1"/>
</dbReference>
<dbReference type="Pfam" id="PF01271">
    <property type="entry name" value="Granin"/>
    <property type="match status" value="1"/>
</dbReference>
<accession>Q03517</accession>
<accession>Q80Y79</accession>
<accession>Q9CW80</accession>
<organism>
    <name type="scientific">Mus musculus</name>
    <name type="common">Mouse</name>
    <dbReference type="NCBI Taxonomy" id="10090"/>
    <lineage>
        <taxon>Eukaryota</taxon>
        <taxon>Metazoa</taxon>
        <taxon>Chordata</taxon>
        <taxon>Craniata</taxon>
        <taxon>Vertebrata</taxon>
        <taxon>Euteleostomi</taxon>
        <taxon>Mammalia</taxon>
        <taxon>Eutheria</taxon>
        <taxon>Euarchontoglires</taxon>
        <taxon>Glires</taxon>
        <taxon>Rodentia</taxon>
        <taxon>Myomorpha</taxon>
        <taxon>Muroidea</taxon>
        <taxon>Muridae</taxon>
        <taxon>Murinae</taxon>
        <taxon>Mus</taxon>
        <taxon>Mus</taxon>
    </lineage>
</organism>
<name>SCG2_MOUSE</name>
<protein>
    <recommendedName>
        <fullName>Secretogranin-2</fullName>
    </recommendedName>
    <alternativeName>
        <fullName>Chromogranin-C</fullName>
    </alternativeName>
    <alternativeName>
        <fullName>Secretogranin II</fullName>
        <shortName>SgII</shortName>
    </alternativeName>
    <component>
        <recommendedName>
            <fullName>Secretoneurin</fullName>
            <shortName>SN</shortName>
        </recommendedName>
    </component>
    <component>
        <recommendedName>
            <fullName>Manserin</fullName>
        </recommendedName>
    </component>
</protein>
<evidence type="ECO:0000250" key="1"/>
<evidence type="ECO:0000250" key="2">
    <source>
        <dbReference type="UniProtKB" id="P10362"/>
    </source>
</evidence>
<evidence type="ECO:0000250" key="3">
    <source>
        <dbReference type="UniProtKB" id="P13521"/>
    </source>
</evidence>
<evidence type="ECO:0000250" key="4">
    <source>
        <dbReference type="UniProtKB" id="P30945"/>
    </source>
</evidence>
<evidence type="ECO:0000256" key="5">
    <source>
        <dbReference type="SAM" id="MobiDB-lite"/>
    </source>
</evidence>
<evidence type="ECO:0000305" key="6"/>
<evidence type="ECO:0007744" key="7">
    <source>
    </source>
</evidence>